<protein>
    <recommendedName>
        <fullName evidence="1">Glucose-6-phosphate isomerase</fullName>
        <shortName evidence="1">GPI</shortName>
        <ecNumber evidence="1">5.3.1.9</ecNumber>
    </recommendedName>
    <alternativeName>
        <fullName evidence="1">Phosphoglucose isomerase</fullName>
        <shortName evidence="1">PGI</shortName>
    </alternativeName>
    <alternativeName>
        <fullName evidence="1">Phosphohexose isomerase</fullName>
        <shortName evidence="1">PHI</shortName>
    </alternativeName>
</protein>
<gene>
    <name evidence="1" type="primary">pgi</name>
    <name type="ordered locus">SGR_5578</name>
</gene>
<name>G6PI_STRGG</name>
<keyword id="KW-0963">Cytoplasm</keyword>
<keyword id="KW-0312">Gluconeogenesis</keyword>
<keyword id="KW-0324">Glycolysis</keyword>
<keyword id="KW-0413">Isomerase</keyword>
<sequence length="552" mass="60820">MNAASRTKLNQTPEWTALAKHREELGAPRLRELFARQPDRGTAYTLRVGDLHLDYSKHLVTDETLRLLRELAAATGVAELREAMFRGEKINTTEDRAVLHTALRAPRDAVVEVDGENVVPAVHAVLDKMAGFAEKVRSGQWTGHTGKPVKNIVNIGIGGSDLGPAMAYEVLRSFTDRDLTLRFVSNVDGADLHEAVRDLDPAETLFVIASKTFTTIETITNATSARDWLLTELRTGQDAVAKHFVALSTNAEKVEEFGIDTANMFEFWDWVGGRYSYDSAIGLSLMVAIGPDRFREMLEGFHLVDEHFRTAPPEENAPLLLGLLGVWYGNFFDAQSHAVLPYSHYLSKFTAYLQQLDMESNGKSVDRDGNPVDWQTGPVVWGTPGTNGQHAYYQLIHQGTKLIPADFIGFAAPVHDLLPGLIAQHDLLMANFFAQTQALAFGKTPEEVRAEGVPEELVPHKTFRGNHPTTTILADKLTPSVLGQLIALYEHKVFVQGAIWNIDSFDQWGVELGKVLAKKIEPLLTGDGGADAGELDSSTAALVDAYRTLRGR</sequence>
<organism>
    <name type="scientific">Streptomyces griseus subsp. griseus (strain JCM 4626 / CBS 651.72 / NBRC 13350 / KCC S-0626 / ISP 5235)</name>
    <dbReference type="NCBI Taxonomy" id="455632"/>
    <lineage>
        <taxon>Bacteria</taxon>
        <taxon>Bacillati</taxon>
        <taxon>Actinomycetota</taxon>
        <taxon>Actinomycetes</taxon>
        <taxon>Kitasatosporales</taxon>
        <taxon>Streptomycetaceae</taxon>
        <taxon>Streptomyces</taxon>
    </lineage>
</organism>
<comment type="function">
    <text evidence="1">Catalyzes the reversible isomerization of glucose-6-phosphate to fructose-6-phosphate.</text>
</comment>
<comment type="catalytic activity">
    <reaction evidence="1">
        <text>alpha-D-glucose 6-phosphate = beta-D-fructose 6-phosphate</text>
        <dbReference type="Rhea" id="RHEA:11816"/>
        <dbReference type="ChEBI" id="CHEBI:57634"/>
        <dbReference type="ChEBI" id="CHEBI:58225"/>
        <dbReference type="EC" id="5.3.1.9"/>
    </reaction>
</comment>
<comment type="pathway">
    <text evidence="1">Carbohydrate biosynthesis; gluconeogenesis.</text>
</comment>
<comment type="pathway">
    <text evidence="1">Carbohydrate degradation; glycolysis; D-glyceraldehyde 3-phosphate and glycerone phosphate from D-glucose: step 2/4.</text>
</comment>
<comment type="subcellular location">
    <subcellularLocation>
        <location evidence="1">Cytoplasm</location>
    </subcellularLocation>
</comment>
<comment type="similarity">
    <text evidence="1">Belongs to the GPI family.</text>
</comment>
<accession>B1W0Z7</accession>
<evidence type="ECO:0000255" key="1">
    <source>
        <dbReference type="HAMAP-Rule" id="MF_00473"/>
    </source>
</evidence>
<dbReference type="EC" id="5.3.1.9" evidence="1"/>
<dbReference type="EMBL" id="AP009493">
    <property type="protein sequence ID" value="BAG22407.1"/>
    <property type="molecule type" value="Genomic_DNA"/>
</dbReference>
<dbReference type="RefSeq" id="WP_012381401.1">
    <property type="nucleotide sequence ID" value="NC_010572.1"/>
</dbReference>
<dbReference type="SMR" id="B1W0Z7"/>
<dbReference type="KEGG" id="sgr:SGR_5578"/>
<dbReference type="PATRIC" id="fig|455632.4.peg.5713"/>
<dbReference type="eggNOG" id="COG0166">
    <property type="taxonomic scope" value="Bacteria"/>
</dbReference>
<dbReference type="HOGENOM" id="CLU_017947_3_1_11"/>
<dbReference type="UniPathway" id="UPA00109">
    <property type="reaction ID" value="UER00181"/>
</dbReference>
<dbReference type="UniPathway" id="UPA00138"/>
<dbReference type="Proteomes" id="UP000001685">
    <property type="component" value="Chromosome"/>
</dbReference>
<dbReference type="GO" id="GO:0005829">
    <property type="term" value="C:cytosol"/>
    <property type="evidence" value="ECO:0007669"/>
    <property type="project" value="TreeGrafter"/>
</dbReference>
<dbReference type="GO" id="GO:0097367">
    <property type="term" value="F:carbohydrate derivative binding"/>
    <property type="evidence" value="ECO:0007669"/>
    <property type="project" value="InterPro"/>
</dbReference>
<dbReference type="GO" id="GO:0004347">
    <property type="term" value="F:glucose-6-phosphate isomerase activity"/>
    <property type="evidence" value="ECO:0007669"/>
    <property type="project" value="UniProtKB-UniRule"/>
</dbReference>
<dbReference type="GO" id="GO:0048029">
    <property type="term" value="F:monosaccharide binding"/>
    <property type="evidence" value="ECO:0007669"/>
    <property type="project" value="TreeGrafter"/>
</dbReference>
<dbReference type="GO" id="GO:0006094">
    <property type="term" value="P:gluconeogenesis"/>
    <property type="evidence" value="ECO:0007669"/>
    <property type="project" value="UniProtKB-UniRule"/>
</dbReference>
<dbReference type="GO" id="GO:0051156">
    <property type="term" value="P:glucose 6-phosphate metabolic process"/>
    <property type="evidence" value="ECO:0007669"/>
    <property type="project" value="TreeGrafter"/>
</dbReference>
<dbReference type="GO" id="GO:0006096">
    <property type="term" value="P:glycolytic process"/>
    <property type="evidence" value="ECO:0007669"/>
    <property type="project" value="UniProtKB-UniRule"/>
</dbReference>
<dbReference type="CDD" id="cd05015">
    <property type="entry name" value="SIS_PGI_1"/>
    <property type="match status" value="1"/>
</dbReference>
<dbReference type="CDD" id="cd05016">
    <property type="entry name" value="SIS_PGI_2"/>
    <property type="match status" value="1"/>
</dbReference>
<dbReference type="FunFam" id="3.40.50.10490:FF:000018">
    <property type="entry name" value="Glucose-6-phosphate isomerase"/>
    <property type="match status" value="1"/>
</dbReference>
<dbReference type="Gene3D" id="1.10.1390.10">
    <property type="match status" value="1"/>
</dbReference>
<dbReference type="Gene3D" id="3.40.50.10490">
    <property type="entry name" value="Glucose-6-phosphate isomerase like protein, domain 1"/>
    <property type="match status" value="2"/>
</dbReference>
<dbReference type="HAMAP" id="MF_00473">
    <property type="entry name" value="G6P_isomerase"/>
    <property type="match status" value="1"/>
</dbReference>
<dbReference type="InterPro" id="IPR001672">
    <property type="entry name" value="G6P_Isomerase"/>
</dbReference>
<dbReference type="InterPro" id="IPR023096">
    <property type="entry name" value="G6P_Isomerase_C"/>
</dbReference>
<dbReference type="InterPro" id="IPR018189">
    <property type="entry name" value="Phosphoglucose_isomerase_CS"/>
</dbReference>
<dbReference type="InterPro" id="IPR046348">
    <property type="entry name" value="SIS_dom_sf"/>
</dbReference>
<dbReference type="InterPro" id="IPR035476">
    <property type="entry name" value="SIS_PGI_1"/>
</dbReference>
<dbReference type="InterPro" id="IPR035482">
    <property type="entry name" value="SIS_PGI_2"/>
</dbReference>
<dbReference type="NCBIfam" id="NF001211">
    <property type="entry name" value="PRK00179.1"/>
    <property type="match status" value="1"/>
</dbReference>
<dbReference type="PANTHER" id="PTHR11469">
    <property type="entry name" value="GLUCOSE-6-PHOSPHATE ISOMERASE"/>
    <property type="match status" value="1"/>
</dbReference>
<dbReference type="PANTHER" id="PTHR11469:SF1">
    <property type="entry name" value="GLUCOSE-6-PHOSPHATE ISOMERASE"/>
    <property type="match status" value="1"/>
</dbReference>
<dbReference type="Pfam" id="PF00342">
    <property type="entry name" value="PGI"/>
    <property type="match status" value="1"/>
</dbReference>
<dbReference type="PRINTS" id="PR00662">
    <property type="entry name" value="G6PISOMERASE"/>
</dbReference>
<dbReference type="SUPFAM" id="SSF53697">
    <property type="entry name" value="SIS domain"/>
    <property type="match status" value="1"/>
</dbReference>
<dbReference type="PROSITE" id="PS00174">
    <property type="entry name" value="P_GLUCOSE_ISOMERASE_2"/>
    <property type="match status" value="1"/>
</dbReference>
<dbReference type="PROSITE" id="PS51463">
    <property type="entry name" value="P_GLUCOSE_ISOMERASE_3"/>
    <property type="match status" value="1"/>
</dbReference>
<feature type="chain" id="PRO_1000125762" description="Glucose-6-phosphate isomerase">
    <location>
        <begin position="1"/>
        <end position="552"/>
    </location>
</feature>
<feature type="active site" description="Proton donor" evidence="1">
    <location>
        <position position="359"/>
    </location>
</feature>
<feature type="active site" evidence="1">
    <location>
        <position position="390"/>
    </location>
</feature>
<feature type="active site" evidence="1">
    <location>
        <position position="514"/>
    </location>
</feature>
<proteinExistence type="inferred from homology"/>
<reference key="1">
    <citation type="journal article" date="2008" name="J. Bacteriol.">
        <title>Genome sequence of the streptomycin-producing microorganism Streptomyces griseus IFO 13350.</title>
        <authorList>
            <person name="Ohnishi Y."/>
            <person name="Ishikawa J."/>
            <person name="Hara H."/>
            <person name="Suzuki H."/>
            <person name="Ikenoya M."/>
            <person name="Ikeda H."/>
            <person name="Yamashita A."/>
            <person name="Hattori M."/>
            <person name="Horinouchi S."/>
        </authorList>
    </citation>
    <scope>NUCLEOTIDE SEQUENCE [LARGE SCALE GENOMIC DNA]</scope>
    <source>
        <strain>JCM 4626 / CBS 651.72 / NBRC 13350 / KCC S-0626 / ISP 5235</strain>
    </source>
</reference>